<organism>
    <name type="scientific">Anaplasma marginale (strain St. Maries)</name>
    <dbReference type="NCBI Taxonomy" id="234826"/>
    <lineage>
        <taxon>Bacteria</taxon>
        <taxon>Pseudomonadati</taxon>
        <taxon>Pseudomonadota</taxon>
        <taxon>Alphaproteobacteria</taxon>
        <taxon>Rickettsiales</taxon>
        <taxon>Anaplasmataceae</taxon>
        <taxon>Anaplasma</taxon>
    </lineage>
</organism>
<name>TIG_ANAMM</name>
<protein>
    <recommendedName>
        <fullName evidence="1">Trigger factor</fullName>
        <shortName evidence="1">TF</shortName>
        <ecNumber evidence="1">5.2.1.8</ecNumber>
    </recommendedName>
    <alternativeName>
        <fullName evidence="1">PPIase</fullName>
    </alternativeName>
</protein>
<evidence type="ECO:0000255" key="1">
    <source>
        <dbReference type="HAMAP-Rule" id="MF_00303"/>
    </source>
</evidence>
<evidence type="ECO:0000305" key="2"/>
<dbReference type="EC" id="5.2.1.8" evidence="1"/>
<dbReference type="EMBL" id="CP000030">
    <property type="protein sequence ID" value="AAV86398.1"/>
    <property type="status" value="ALT_INIT"/>
    <property type="molecule type" value="Genomic_DNA"/>
</dbReference>
<dbReference type="RefSeq" id="WP_035017828.1">
    <property type="nucleotide sequence ID" value="NC_004842.2"/>
</dbReference>
<dbReference type="SMR" id="Q5PBD1"/>
<dbReference type="KEGG" id="ama:AM308"/>
<dbReference type="HOGENOM" id="CLU_033058_2_2_5"/>
<dbReference type="GO" id="GO:0005737">
    <property type="term" value="C:cytoplasm"/>
    <property type="evidence" value="ECO:0007669"/>
    <property type="project" value="UniProtKB-SubCell"/>
</dbReference>
<dbReference type="GO" id="GO:0003755">
    <property type="term" value="F:peptidyl-prolyl cis-trans isomerase activity"/>
    <property type="evidence" value="ECO:0007669"/>
    <property type="project" value="UniProtKB-UniRule"/>
</dbReference>
<dbReference type="GO" id="GO:0051301">
    <property type="term" value="P:cell division"/>
    <property type="evidence" value="ECO:0007669"/>
    <property type="project" value="UniProtKB-KW"/>
</dbReference>
<dbReference type="GO" id="GO:0006457">
    <property type="term" value="P:protein folding"/>
    <property type="evidence" value="ECO:0007669"/>
    <property type="project" value="UniProtKB-UniRule"/>
</dbReference>
<dbReference type="GO" id="GO:0015031">
    <property type="term" value="P:protein transport"/>
    <property type="evidence" value="ECO:0007669"/>
    <property type="project" value="UniProtKB-UniRule"/>
</dbReference>
<dbReference type="Gene3D" id="3.10.50.40">
    <property type="match status" value="1"/>
</dbReference>
<dbReference type="Gene3D" id="3.30.70.1050">
    <property type="entry name" value="Trigger factor ribosome-binding domain"/>
    <property type="match status" value="1"/>
</dbReference>
<dbReference type="Gene3D" id="1.10.3120.10">
    <property type="entry name" value="Trigger factor, C-terminal domain"/>
    <property type="match status" value="1"/>
</dbReference>
<dbReference type="HAMAP" id="MF_00303">
    <property type="entry name" value="Trigger_factor_Tig"/>
    <property type="match status" value="1"/>
</dbReference>
<dbReference type="InterPro" id="IPR046357">
    <property type="entry name" value="PPIase_dom_sf"/>
</dbReference>
<dbReference type="InterPro" id="IPR001179">
    <property type="entry name" value="PPIase_FKBP_dom"/>
</dbReference>
<dbReference type="InterPro" id="IPR005215">
    <property type="entry name" value="Trig_fac"/>
</dbReference>
<dbReference type="InterPro" id="IPR008880">
    <property type="entry name" value="Trigger_fac_C"/>
</dbReference>
<dbReference type="InterPro" id="IPR037041">
    <property type="entry name" value="Trigger_fac_C_sf"/>
</dbReference>
<dbReference type="InterPro" id="IPR008881">
    <property type="entry name" value="Trigger_fac_ribosome-bd_bac"/>
</dbReference>
<dbReference type="InterPro" id="IPR036611">
    <property type="entry name" value="Trigger_fac_ribosome-bd_sf"/>
</dbReference>
<dbReference type="InterPro" id="IPR027304">
    <property type="entry name" value="Trigger_fact/SurA_dom_sf"/>
</dbReference>
<dbReference type="NCBIfam" id="TIGR00115">
    <property type="entry name" value="tig"/>
    <property type="match status" value="1"/>
</dbReference>
<dbReference type="Pfam" id="PF00254">
    <property type="entry name" value="FKBP_C"/>
    <property type="match status" value="1"/>
</dbReference>
<dbReference type="Pfam" id="PF05698">
    <property type="entry name" value="Trigger_C"/>
    <property type="match status" value="1"/>
</dbReference>
<dbReference type="Pfam" id="PF05697">
    <property type="entry name" value="Trigger_N"/>
    <property type="match status" value="1"/>
</dbReference>
<dbReference type="PIRSF" id="PIRSF003095">
    <property type="entry name" value="Trigger_factor"/>
    <property type="match status" value="1"/>
</dbReference>
<dbReference type="SUPFAM" id="SSF54534">
    <property type="entry name" value="FKBP-like"/>
    <property type="match status" value="1"/>
</dbReference>
<dbReference type="SUPFAM" id="SSF109998">
    <property type="entry name" value="Triger factor/SurA peptide-binding domain-like"/>
    <property type="match status" value="1"/>
</dbReference>
<dbReference type="SUPFAM" id="SSF102735">
    <property type="entry name" value="Trigger factor ribosome-binding domain"/>
    <property type="match status" value="1"/>
</dbReference>
<dbReference type="PROSITE" id="PS50059">
    <property type="entry name" value="FKBP_PPIASE"/>
    <property type="match status" value="1"/>
</dbReference>
<reference key="1">
    <citation type="journal article" date="2005" name="Proc. Natl. Acad. Sci. U.S.A.">
        <title>Complete genome sequencing of Anaplasma marginale reveals that the surface is skewed to two superfamilies of outer membrane proteins.</title>
        <authorList>
            <person name="Brayton K.A."/>
            <person name="Kappmeyer L.S."/>
            <person name="Herndon D.R."/>
            <person name="Dark M.J."/>
            <person name="Tibbals D.L."/>
            <person name="Palmer G.H."/>
            <person name="McGuire T.C."/>
            <person name="Knowles D.P. Jr."/>
        </authorList>
    </citation>
    <scope>NUCLEOTIDE SEQUENCE [LARGE SCALE GENOMIC DNA]</scope>
    <source>
        <strain>St. Maries</strain>
    </source>
</reference>
<gene>
    <name evidence="1" type="primary">tig</name>
    <name type="ordered locus">AM308</name>
</gene>
<accession>Q5PBD1</accession>
<comment type="function">
    <text evidence="1">Involved in protein export. Acts as a chaperone by maintaining the newly synthesized protein in an open conformation. Functions as a peptidyl-prolyl cis-trans isomerase.</text>
</comment>
<comment type="catalytic activity">
    <reaction evidence="1">
        <text>[protein]-peptidylproline (omega=180) = [protein]-peptidylproline (omega=0)</text>
        <dbReference type="Rhea" id="RHEA:16237"/>
        <dbReference type="Rhea" id="RHEA-COMP:10747"/>
        <dbReference type="Rhea" id="RHEA-COMP:10748"/>
        <dbReference type="ChEBI" id="CHEBI:83833"/>
        <dbReference type="ChEBI" id="CHEBI:83834"/>
        <dbReference type="EC" id="5.2.1.8"/>
    </reaction>
</comment>
<comment type="subcellular location">
    <subcellularLocation>
        <location>Cytoplasm</location>
    </subcellularLocation>
    <text evidence="1">About half TF is bound to the ribosome near the polypeptide exit tunnel while the other half is free in the cytoplasm.</text>
</comment>
<comment type="domain">
    <text evidence="1">Consists of 3 domains; the N-terminus binds the ribosome, the middle domain has PPIase activity, while the C-terminus has intrinsic chaperone activity on its own.</text>
</comment>
<comment type="similarity">
    <text evidence="1">Belongs to the FKBP-type PPIase family. Tig subfamily.</text>
</comment>
<comment type="sequence caution" evidence="2">
    <conflict type="erroneous initiation">
        <sequence resource="EMBL-CDS" id="AAV86398"/>
    </conflict>
</comment>
<proteinExistence type="inferred from homology"/>
<sequence length="441" mass="49286">MQRFYVVKEVLSDKLKRVYEFTVGNEYLEQQVDDRLREIAANVRMDGFRKGKVSLDLVRRNCGEDVVREVLSKVVDDASSQFMQEGGFGDVVTSEVRITSHPKVCSTEGKGGDLVYELQFELMPEVPSINPEEIALKEMEAEIGQEDVDKFIGELKTRYPNFVASDSPKQRAAAGDKVVIDYNSSFKGKALRGGSAKGFVAVLGGGHLPKEFEDKITGMKVGDVKEFKLGFPSDYRVRLFAGKEVEMSVKLVSIMVPKDVGDHEELAKSCGFGCAEDMVNFATESLKGRFAFMSDALMRKELFDHMETIYQGQVPESVVSQESARIRRELAPSELEAMGEDGILKEAERRVRLGMLLMKVSQDNNIAVEARDISAFVQSNYLNYGASLESVLKLLRSNQGVRDHIRGKVLEDKVVRYMVAKAKKERQNVPAGDLKSLFESI</sequence>
<keyword id="KW-0131">Cell cycle</keyword>
<keyword id="KW-0132">Cell division</keyword>
<keyword id="KW-0143">Chaperone</keyword>
<keyword id="KW-0963">Cytoplasm</keyword>
<keyword id="KW-0413">Isomerase</keyword>
<keyword id="KW-0697">Rotamase</keyword>
<feature type="chain" id="PRO_0000179300" description="Trigger factor">
    <location>
        <begin position="1"/>
        <end position="441"/>
    </location>
</feature>
<feature type="domain" description="PPIase FKBP-type" evidence="1">
    <location>
        <begin position="175"/>
        <end position="260"/>
    </location>
</feature>